<feature type="chain" id="PRO_0000047449" description="Zinc finger protein 200">
    <location>
        <begin position="1"/>
        <end position="395"/>
    </location>
</feature>
<feature type="zinc finger region" description="C2H2-type 1" evidence="1">
    <location>
        <begin position="252"/>
        <end position="274"/>
    </location>
</feature>
<feature type="zinc finger region" description="C2H2-type 2" evidence="1">
    <location>
        <begin position="280"/>
        <end position="302"/>
    </location>
</feature>
<feature type="zinc finger region" description="C2H2-type 3" evidence="1">
    <location>
        <begin position="308"/>
        <end position="330"/>
    </location>
</feature>
<feature type="zinc finger region" description="C2H2-type 4" evidence="1">
    <location>
        <begin position="336"/>
        <end position="358"/>
    </location>
</feature>
<feature type="zinc finger region" description="C2H2-type 5" evidence="1">
    <location>
        <begin position="364"/>
        <end position="386"/>
    </location>
</feature>
<feature type="region of interest" description="Disordered" evidence="2">
    <location>
        <begin position="157"/>
        <end position="208"/>
    </location>
</feature>
<feature type="region of interest" description="Interaction with PRMT3" evidence="3">
    <location>
        <begin position="246"/>
        <end position="395"/>
    </location>
</feature>
<feature type="compositionally biased region" description="Basic and acidic residues" evidence="2">
    <location>
        <begin position="169"/>
        <end position="181"/>
    </location>
</feature>
<feature type="splice variant" id="VSP_036037" description="In isoform 2." evidence="5">
    <location>
        <position position="114"/>
    </location>
</feature>
<feature type="splice variant" id="VSP_046734" description="In isoform 3." evidence="4">
    <location>
        <position position="156"/>
    </location>
</feature>
<feature type="sequence variant" id="VAR_052790" description="In dbSNP:rs9302870.">
    <original>T</original>
    <variation>M</variation>
    <location>
        <position position="140"/>
    </location>
</feature>
<organism>
    <name type="scientific">Homo sapiens</name>
    <name type="common">Human</name>
    <dbReference type="NCBI Taxonomy" id="9606"/>
    <lineage>
        <taxon>Eukaryota</taxon>
        <taxon>Metazoa</taxon>
        <taxon>Chordata</taxon>
        <taxon>Craniata</taxon>
        <taxon>Vertebrata</taxon>
        <taxon>Euteleostomi</taxon>
        <taxon>Mammalia</taxon>
        <taxon>Eutheria</taxon>
        <taxon>Euarchontoglires</taxon>
        <taxon>Primates</taxon>
        <taxon>Haplorrhini</taxon>
        <taxon>Catarrhini</taxon>
        <taxon>Hominidae</taxon>
        <taxon>Homo</taxon>
    </lineage>
</organism>
<protein>
    <recommendedName>
        <fullName>Zinc finger protein 200</fullName>
    </recommendedName>
</protein>
<sequence>MMAAKVVPMPPKPKQSFILRVPPDSKLGQDLLRDATNGPKTIHQLVLEHFLTFLPKPSLVQPSQKVKETLVIMKDVSSSLQNRVHPRPLVKLLPKGVQKEQETVSLYLKANPEELVVFEDLNVFHCQEECVSLDPTQQLTSEKEDDSSVGEMMLLAVNGSNPEGEDPEREPVENEDYREKSSDDDEMDSSLVSQQPPDNQEKERLNTSIPQKRKMRNLLVTIENDTPLEELSKYVDISIIALTRNRRTRRWYTCPLCGKQFNESSYLISHQRTHTGEKPYDCNHCGKSFNHKTNLNKHERIHTGEKPYSCSQCGKNFRQNSHRSRHEGIHIREKIFKCPECGKTFPKNEEFVLHLQSHEAERPYGCKKCGRRFGRLSNCTRHEKTHSACKTRKQK</sequence>
<dbReference type="EMBL" id="AF060866">
    <property type="protein sequence ID" value="AAC70008.1"/>
    <property type="status" value="ALT_INIT"/>
    <property type="molecule type" value="mRNA"/>
</dbReference>
<dbReference type="EMBL" id="Y14443">
    <property type="protein sequence ID" value="CAA74795.1"/>
    <property type="molecule type" value="mRNA"/>
</dbReference>
<dbReference type="EMBL" id="AJ003147">
    <property type="protein sequence ID" value="CAA05905.1"/>
    <property type="molecule type" value="Genomic_DNA"/>
</dbReference>
<dbReference type="EMBL" id="CH471112">
    <property type="protein sequence ID" value="EAW85384.1"/>
    <property type="molecule type" value="Genomic_DNA"/>
</dbReference>
<dbReference type="EMBL" id="CH471112">
    <property type="protein sequence ID" value="EAW85385.1"/>
    <property type="molecule type" value="Genomic_DNA"/>
</dbReference>
<dbReference type="EMBL" id="CH471112">
    <property type="protein sequence ID" value="EAW85386.1"/>
    <property type="molecule type" value="Genomic_DNA"/>
</dbReference>
<dbReference type="EMBL" id="CH471112">
    <property type="protein sequence ID" value="EAW85387.1"/>
    <property type="molecule type" value="Genomic_DNA"/>
</dbReference>
<dbReference type="EMBL" id="CH471112">
    <property type="protein sequence ID" value="EAW85388.1"/>
    <property type="molecule type" value="Genomic_DNA"/>
</dbReference>
<dbReference type="EMBL" id="BC012909">
    <property type="protein sequence ID" value="AAH12909.1"/>
    <property type="molecule type" value="mRNA"/>
</dbReference>
<dbReference type="EMBL" id="BC032575">
    <property type="protein sequence ID" value="AAH32575.1"/>
    <property type="molecule type" value="mRNA"/>
</dbReference>
<dbReference type="EMBL" id="BC054005">
    <property type="protein sequence ID" value="AAH54005.1"/>
    <property type="status" value="ALT_INIT"/>
    <property type="molecule type" value="mRNA"/>
</dbReference>
<dbReference type="CCDS" id="CCDS10497.1">
    <molecule id="P98182-1"/>
</dbReference>
<dbReference type="CCDS" id="CCDS42112.1">
    <molecule id="P98182-2"/>
</dbReference>
<dbReference type="CCDS" id="CCDS45395.1">
    <molecule id="P98182-3"/>
</dbReference>
<dbReference type="RefSeq" id="NP_001138918.1">
    <molecule id="P98182-3"/>
    <property type="nucleotide sequence ID" value="NM_001145446.2"/>
</dbReference>
<dbReference type="RefSeq" id="NP_001138919.1">
    <molecule id="P98182-3"/>
    <property type="nucleotide sequence ID" value="NM_001145447.2"/>
</dbReference>
<dbReference type="RefSeq" id="NP_001138920.1">
    <molecule id="P98182-3"/>
    <property type="nucleotide sequence ID" value="NM_001145448.2"/>
</dbReference>
<dbReference type="RefSeq" id="NP_003445.2">
    <molecule id="P98182-1"/>
    <property type="nucleotide sequence ID" value="NM_003454.3"/>
</dbReference>
<dbReference type="RefSeq" id="NP_932353.1">
    <molecule id="P98182-2"/>
    <property type="nucleotide sequence ID" value="NM_198087.3"/>
</dbReference>
<dbReference type="RefSeq" id="NP_932354.1">
    <molecule id="P98182-1"/>
    <property type="nucleotide sequence ID" value="NM_198088.3"/>
</dbReference>
<dbReference type="RefSeq" id="XP_005255613.1">
    <property type="nucleotide sequence ID" value="XM_005255556.1"/>
</dbReference>
<dbReference type="RefSeq" id="XP_006721003.1">
    <property type="nucleotide sequence ID" value="XM_006720940.2"/>
</dbReference>
<dbReference type="RefSeq" id="XP_006721004.1">
    <molecule id="P98182-1"/>
    <property type="nucleotide sequence ID" value="XM_006720941.3"/>
</dbReference>
<dbReference type="RefSeq" id="XP_016879136.1">
    <property type="nucleotide sequence ID" value="XM_017023647.1"/>
</dbReference>
<dbReference type="RefSeq" id="XP_047290552.1">
    <molecule id="P98182-1"/>
    <property type="nucleotide sequence ID" value="XM_047434596.1"/>
</dbReference>
<dbReference type="RefSeq" id="XP_047290553.1">
    <molecule id="P98182-1"/>
    <property type="nucleotide sequence ID" value="XM_047434597.1"/>
</dbReference>
<dbReference type="RefSeq" id="XP_047290554.1">
    <molecule id="P98182-1"/>
    <property type="nucleotide sequence ID" value="XM_047434598.1"/>
</dbReference>
<dbReference type="RefSeq" id="XP_047290555.1">
    <molecule id="P98182-3"/>
    <property type="nucleotide sequence ID" value="XM_047434599.1"/>
</dbReference>
<dbReference type="RefSeq" id="XP_047290556.1">
    <molecule id="P98182-3"/>
    <property type="nucleotide sequence ID" value="XM_047434600.1"/>
</dbReference>
<dbReference type="RefSeq" id="XP_054169827.1">
    <molecule id="P98182-1"/>
    <property type="nucleotide sequence ID" value="XM_054313852.1"/>
</dbReference>
<dbReference type="RefSeq" id="XP_054169828.1">
    <molecule id="P98182-1"/>
    <property type="nucleotide sequence ID" value="XM_054313853.1"/>
</dbReference>
<dbReference type="RefSeq" id="XP_054169829.1">
    <molecule id="P98182-1"/>
    <property type="nucleotide sequence ID" value="XM_054313854.1"/>
</dbReference>
<dbReference type="RefSeq" id="XP_054169830.1">
    <molecule id="P98182-1"/>
    <property type="nucleotide sequence ID" value="XM_054313855.1"/>
</dbReference>
<dbReference type="RefSeq" id="XP_054169831.1">
    <molecule id="P98182-1"/>
    <property type="nucleotide sequence ID" value="XM_054313856.1"/>
</dbReference>
<dbReference type="RefSeq" id="XP_054169832.1">
    <molecule id="P98182-1"/>
    <property type="nucleotide sequence ID" value="XM_054313857.1"/>
</dbReference>
<dbReference type="RefSeq" id="XP_054169833.1">
    <molecule id="P98182-1"/>
    <property type="nucleotide sequence ID" value="XM_054313858.1"/>
</dbReference>
<dbReference type="RefSeq" id="XP_054169834.1">
    <molecule id="P98182-1"/>
    <property type="nucleotide sequence ID" value="XM_054313859.1"/>
</dbReference>
<dbReference type="RefSeq" id="XP_054169835.1">
    <molecule id="P98182-1"/>
    <property type="nucleotide sequence ID" value="XM_054313860.1"/>
</dbReference>
<dbReference type="RefSeq" id="XP_054169836.1">
    <molecule id="P98182-3"/>
    <property type="nucleotide sequence ID" value="XM_054313861.1"/>
</dbReference>
<dbReference type="RefSeq" id="XP_054169837.1">
    <molecule id="P98182-3"/>
    <property type="nucleotide sequence ID" value="XM_054313862.1"/>
</dbReference>
<dbReference type="RefSeq" id="XP_054169838.1">
    <molecule id="P98182-3"/>
    <property type="nucleotide sequence ID" value="XM_054313863.1"/>
</dbReference>
<dbReference type="RefSeq" id="XP_054169839.1">
    <molecule id="P98182-3"/>
    <property type="nucleotide sequence ID" value="XM_054313864.1"/>
</dbReference>
<dbReference type="RefSeq" id="XP_054169840.1">
    <molecule id="P98182-3"/>
    <property type="nucleotide sequence ID" value="XM_054313865.1"/>
</dbReference>
<dbReference type="RefSeq" id="XP_054169841.1">
    <molecule id="P98182-3"/>
    <property type="nucleotide sequence ID" value="XM_054313866.1"/>
</dbReference>
<dbReference type="RefSeq" id="XP_054169842.1">
    <molecule id="P98182-3"/>
    <property type="nucleotide sequence ID" value="XM_054313867.1"/>
</dbReference>
<dbReference type="RefSeq" id="XP_054169843.1">
    <molecule id="P98182-3"/>
    <property type="nucleotide sequence ID" value="XM_054313868.1"/>
</dbReference>
<dbReference type="SMR" id="P98182"/>
<dbReference type="BioGRID" id="113536">
    <property type="interactions" value="13"/>
</dbReference>
<dbReference type="FunCoup" id="P98182">
    <property type="interactions" value="77"/>
</dbReference>
<dbReference type="IntAct" id="P98182">
    <property type="interactions" value="9"/>
</dbReference>
<dbReference type="MINT" id="P98182"/>
<dbReference type="STRING" id="9606.ENSP00000395723"/>
<dbReference type="iPTMnet" id="P98182"/>
<dbReference type="PhosphoSitePlus" id="P98182"/>
<dbReference type="BioMuta" id="ZNF200"/>
<dbReference type="DMDM" id="218511971"/>
<dbReference type="jPOST" id="P98182"/>
<dbReference type="MassIVE" id="P98182"/>
<dbReference type="PaxDb" id="9606-ENSP00000395723"/>
<dbReference type="PeptideAtlas" id="P98182"/>
<dbReference type="ProteomicsDB" id="12764"/>
<dbReference type="ProteomicsDB" id="57817">
    <molecule id="P98182-1"/>
</dbReference>
<dbReference type="ProteomicsDB" id="57818">
    <molecule id="P98182-2"/>
</dbReference>
<dbReference type="Pumba" id="P98182"/>
<dbReference type="Antibodypedia" id="10763">
    <property type="antibodies" value="208 antibodies from 19 providers"/>
</dbReference>
<dbReference type="DNASU" id="7752"/>
<dbReference type="Ensembl" id="ENST00000396868.7">
    <molecule id="P98182-2"/>
    <property type="protein sequence ID" value="ENSP00000380077.3"/>
    <property type="gene ID" value="ENSG00000010539.12"/>
</dbReference>
<dbReference type="Ensembl" id="ENST00000396870.8">
    <molecule id="P98182-3"/>
    <property type="protein sequence ID" value="ENSP00000380079.4"/>
    <property type="gene ID" value="ENSG00000010539.12"/>
</dbReference>
<dbReference type="Ensembl" id="ENST00000396871.8">
    <molecule id="P98182-3"/>
    <property type="protein sequence ID" value="ENSP00000380080.4"/>
    <property type="gene ID" value="ENSG00000010539.12"/>
</dbReference>
<dbReference type="Ensembl" id="ENST00000414144.7">
    <molecule id="P98182-1"/>
    <property type="protein sequence ID" value="ENSP00000405786.2"/>
    <property type="gene ID" value="ENSG00000010539.12"/>
</dbReference>
<dbReference type="Ensembl" id="ENST00000431561.7">
    <molecule id="P98182-1"/>
    <property type="protein sequence ID" value="ENSP00000395723.3"/>
    <property type="gene ID" value="ENSG00000010539.12"/>
</dbReference>
<dbReference type="Ensembl" id="ENST00000575948.1">
    <molecule id="P98182-3"/>
    <property type="protein sequence ID" value="ENSP00000458508.1"/>
    <property type="gene ID" value="ENSG00000010539.12"/>
</dbReference>
<dbReference type="GeneID" id="7752"/>
<dbReference type="KEGG" id="hsa:7752"/>
<dbReference type="MANE-Select" id="ENST00000414144.7">
    <property type="protein sequence ID" value="ENSP00000405786.2"/>
    <property type="RefSeq nucleotide sequence ID" value="NM_198088.3"/>
    <property type="RefSeq protein sequence ID" value="NP_932354.1"/>
</dbReference>
<dbReference type="UCSC" id="uc002cui.3">
    <molecule id="P98182-1"/>
    <property type="organism name" value="human"/>
</dbReference>
<dbReference type="AGR" id="HGNC:12993"/>
<dbReference type="CTD" id="7752"/>
<dbReference type="DisGeNET" id="7752"/>
<dbReference type="GeneCards" id="ZNF200"/>
<dbReference type="HGNC" id="HGNC:12993">
    <property type="gene designation" value="ZNF200"/>
</dbReference>
<dbReference type="HPA" id="ENSG00000010539">
    <property type="expression patterns" value="Tissue enhanced (testis)"/>
</dbReference>
<dbReference type="MIM" id="603231">
    <property type="type" value="gene"/>
</dbReference>
<dbReference type="neXtProt" id="NX_P98182"/>
<dbReference type="OpenTargets" id="ENSG00000010539"/>
<dbReference type="PharmGKB" id="PA37573"/>
<dbReference type="VEuPathDB" id="HostDB:ENSG00000010539"/>
<dbReference type="eggNOG" id="KOG1721">
    <property type="taxonomic scope" value="Eukaryota"/>
</dbReference>
<dbReference type="GeneTree" id="ENSGT00940000162595"/>
<dbReference type="HOGENOM" id="CLU_058938_0_0_1"/>
<dbReference type="InParanoid" id="P98182"/>
<dbReference type="OMA" id="HEVIHVK"/>
<dbReference type="OrthoDB" id="3561125at2759"/>
<dbReference type="PAN-GO" id="P98182">
    <property type="GO annotations" value="0 GO annotations based on evolutionary models"/>
</dbReference>
<dbReference type="PhylomeDB" id="P98182"/>
<dbReference type="TreeFam" id="TF342316"/>
<dbReference type="PathwayCommons" id="P98182"/>
<dbReference type="Reactome" id="R-HSA-212436">
    <property type="pathway name" value="Generic Transcription Pathway"/>
</dbReference>
<dbReference type="SignaLink" id="P98182"/>
<dbReference type="BioGRID-ORCS" id="7752">
    <property type="hits" value="12 hits in 1182 CRISPR screens"/>
</dbReference>
<dbReference type="GenomeRNAi" id="7752"/>
<dbReference type="Pharos" id="P98182">
    <property type="development level" value="Tdark"/>
</dbReference>
<dbReference type="PRO" id="PR:P98182"/>
<dbReference type="Proteomes" id="UP000005640">
    <property type="component" value="Chromosome 16"/>
</dbReference>
<dbReference type="RNAct" id="P98182">
    <property type="molecule type" value="protein"/>
</dbReference>
<dbReference type="Bgee" id="ENSG00000010539">
    <property type="expression patterns" value="Expressed in secondary oocyte and 158 other cell types or tissues"/>
</dbReference>
<dbReference type="ExpressionAtlas" id="P98182">
    <property type="expression patterns" value="baseline and differential"/>
</dbReference>
<dbReference type="GO" id="GO:0005634">
    <property type="term" value="C:nucleus"/>
    <property type="evidence" value="ECO:0000314"/>
    <property type="project" value="UniProtKB"/>
</dbReference>
<dbReference type="GO" id="GO:0008270">
    <property type="term" value="F:zinc ion binding"/>
    <property type="evidence" value="ECO:0007669"/>
    <property type="project" value="UniProtKB-KW"/>
</dbReference>
<dbReference type="GO" id="GO:0034504">
    <property type="term" value="P:protein localization to nucleus"/>
    <property type="evidence" value="ECO:0000353"/>
    <property type="project" value="UniProtKB"/>
</dbReference>
<dbReference type="FunFam" id="3.30.160.60:FF:001771">
    <property type="entry name" value="Zinc finger protein 200"/>
    <property type="match status" value="1"/>
</dbReference>
<dbReference type="FunFam" id="3.30.160.60:FF:002005">
    <property type="entry name" value="Zinc finger protein 200"/>
    <property type="match status" value="1"/>
</dbReference>
<dbReference type="FunFam" id="3.30.160.60:FF:002660">
    <property type="entry name" value="Zinc finger protein 200"/>
    <property type="match status" value="1"/>
</dbReference>
<dbReference type="FunFam" id="3.30.160.60:FF:001325">
    <property type="entry name" value="zinc finger protein 200"/>
    <property type="match status" value="1"/>
</dbReference>
<dbReference type="FunFam" id="3.30.160.60:FF:001830">
    <property type="entry name" value="zinc finger protein 200"/>
    <property type="match status" value="1"/>
</dbReference>
<dbReference type="Gene3D" id="3.30.160.60">
    <property type="entry name" value="Classic Zinc Finger"/>
    <property type="match status" value="5"/>
</dbReference>
<dbReference type="InterPro" id="IPR036236">
    <property type="entry name" value="Znf_C2H2_sf"/>
</dbReference>
<dbReference type="InterPro" id="IPR013087">
    <property type="entry name" value="Znf_C2H2_type"/>
</dbReference>
<dbReference type="PANTHER" id="PTHR23226:SF416">
    <property type="entry name" value="FI01424P"/>
    <property type="match status" value="1"/>
</dbReference>
<dbReference type="PANTHER" id="PTHR23226">
    <property type="entry name" value="ZINC FINGER AND SCAN DOMAIN-CONTAINING"/>
    <property type="match status" value="1"/>
</dbReference>
<dbReference type="Pfam" id="PF00096">
    <property type="entry name" value="zf-C2H2"/>
    <property type="match status" value="4"/>
</dbReference>
<dbReference type="SMART" id="SM00355">
    <property type="entry name" value="ZnF_C2H2"/>
    <property type="match status" value="5"/>
</dbReference>
<dbReference type="SUPFAM" id="SSF57667">
    <property type="entry name" value="beta-beta-alpha zinc fingers"/>
    <property type="match status" value="3"/>
</dbReference>
<dbReference type="PROSITE" id="PS00028">
    <property type="entry name" value="ZINC_FINGER_C2H2_1"/>
    <property type="match status" value="5"/>
</dbReference>
<dbReference type="PROSITE" id="PS50157">
    <property type="entry name" value="ZINC_FINGER_C2H2_2"/>
    <property type="match status" value="5"/>
</dbReference>
<keyword id="KW-0025">Alternative splicing</keyword>
<keyword id="KW-0479">Metal-binding</keyword>
<keyword id="KW-0539">Nucleus</keyword>
<keyword id="KW-1267">Proteomics identification</keyword>
<keyword id="KW-1185">Reference proteome</keyword>
<keyword id="KW-0677">Repeat</keyword>
<keyword id="KW-0804">Transcription</keyword>
<keyword id="KW-0805">Transcription regulation</keyword>
<keyword id="KW-0862">Zinc</keyword>
<keyword id="KW-0863">Zinc-finger</keyword>
<gene>
    <name type="primary">ZNF200</name>
    <name type="synonym">ZNFMF</name>
</gene>
<comment type="function">
    <text evidence="3">Localizes protein arginine N-methyltransferase PRMT3 to the nucleus.</text>
</comment>
<comment type="subunit">
    <text evidence="3">Interacts (via C-terminus) with PRMT3 (via zinc-finger); the interaction is direct and required to localize protein arginine N-methyltransferase PRMT3 to the nucleus and inhibit its proteasomal degradation.</text>
</comment>
<comment type="interaction">
    <interactant intactId="EBI-3913354">
        <id>P98182</id>
    </interactant>
    <interactant intactId="EBI-701903">
        <id>Q14192</id>
        <label>FHL2</label>
    </interactant>
    <organismsDiffer>false</organismsDiffer>
    <experiments>3</experiments>
</comment>
<comment type="interaction">
    <interactant intactId="EBI-3913354">
        <id>P98182</id>
    </interactant>
    <interactant intactId="EBI-745958">
        <id>Q5VWN6</id>
        <label>TASOR2</label>
    </interactant>
    <organismsDiffer>false</organismsDiffer>
    <experiments>3</experiments>
</comment>
<comment type="subcellular location">
    <subcellularLocation>
        <location evidence="3">Nucleus</location>
    </subcellularLocation>
</comment>
<comment type="alternative products">
    <event type="alternative splicing"/>
    <isoform>
        <id>P98182-1</id>
        <name>1</name>
        <sequence type="displayed"/>
    </isoform>
    <isoform>
        <id>P98182-2</id>
        <name>2</name>
        <sequence type="described" ref="VSP_036037"/>
    </isoform>
    <isoform>
        <id>P98182-3</id>
        <name>3</name>
        <sequence type="described" ref="VSP_046734"/>
    </isoform>
</comment>
<comment type="tissue specificity">
    <text>Highly expressed in testis, weakly expressed in spleen, thymus, prostate, ovary, small intestine colon and peripheral blood leukocytes.</text>
</comment>
<comment type="sequence caution" evidence="6">
    <conflict type="erroneous initiation">
        <sequence resource="EMBL-CDS" id="AAC70008"/>
    </conflict>
    <text>Truncated N-terminus.</text>
</comment>
<comment type="sequence caution" evidence="6">
    <conflict type="erroneous initiation">
        <sequence resource="EMBL-CDS" id="AAH54005"/>
    </conflict>
    <text>Truncated N-terminus.</text>
</comment>
<proteinExistence type="evidence at protein level"/>
<accession>P98182</accession>
<accession>D3DUB7</accession>
<accession>D3DUB8</accession>
<accession>O15361</accession>
<accession>Q5XKM5</accession>
<accession>Q7Z5V1</accession>
<name>ZN200_HUMAN</name>
<reference key="1">
    <citation type="journal article" date="1998" name="Genomics">
        <title>Identification of two Kruppel-related zinc finger genes (ZNF200 and ZNF210) from human chromosome 16p13.3.</title>
        <authorList>
            <person name="Deng Z."/>
            <person name="Centola M."/>
            <person name="Chen X."/>
            <person name="Sood R."/>
            <person name="Vedula A."/>
            <person name="Fischel-Ghodsian N."/>
            <person name="Kastner D.L."/>
        </authorList>
    </citation>
    <scope>NUCLEOTIDE SEQUENCE [MRNA] (ISOFORM 1)</scope>
</reference>
<reference key="2">
    <citation type="journal article" date="1997" name="Nat. Genet.">
        <title>A candidate gene for familial Mediterranean fever.</title>
        <authorList>
            <person name="Bernot A."/>
            <person name="Clepet C."/>
            <person name="Dasilva C."/>
            <person name="Devaud C."/>
            <person name="Petit J.-L."/>
            <person name="Caloustian C."/>
            <person name="Cruaud C."/>
            <person name="Samson D."/>
            <person name="Pulcini F."/>
            <person name="Weissenbach J."/>
            <person name="Heilig R."/>
            <person name="Notanicola C."/>
            <person name="Domingo C."/>
            <person name="Rozenbaum M."/>
            <person name="Benchetrit E."/>
            <person name="Topaloglu R."/>
            <person name="Dewalle M."/>
            <person name="Dross C."/>
            <person name="Hadjari P."/>
            <person name="Dupont M."/>
            <person name="Demaille J.G."/>
            <person name="Touitou I."/>
            <person name="Smaoui N."/>
            <person name="Nedelec B."/>
            <person name="Mery J.-P."/>
            <person name="Chaabouni H."/>
            <person name="Delpech M."/>
            <person name="Grateau G."/>
        </authorList>
    </citation>
    <scope>NUCLEOTIDE SEQUENCE [GENOMIC DNA / MRNA] (ISOFORM 2)</scope>
    <source>
        <tissue>Liver</tissue>
    </source>
</reference>
<reference key="3">
    <citation type="submission" date="2005-09" db="EMBL/GenBank/DDBJ databases">
        <authorList>
            <person name="Mural R.J."/>
            <person name="Istrail S."/>
            <person name="Sutton G.G."/>
            <person name="Florea L."/>
            <person name="Halpern A.L."/>
            <person name="Mobarry C.M."/>
            <person name="Lippert R."/>
            <person name="Walenz B."/>
            <person name="Shatkay H."/>
            <person name="Dew I."/>
            <person name="Miller J.R."/>
            <person name="Flanigan M.J."/>
            <person name="Edwards N.J."/>
            <person name="Bolanos R."/>
            <person name="Fasulo D."/>
            <person name="Halldorsson B.V."/>
            <person name="Hannenhalli S."/>
            <person name="Turner R."/>
            <person name="Yooseph S."/>
            <person name="Lu F."/>
            <person name="Nusskern D.R."/>
            <person name="Shue B.C."/>
            <person name="Zheng X.H."/>
            <person name="Zhong F."/>
            <person name="Delcher A.L."/>
            <person name="Huson D.H."/>
            <person name="Kravitz S.A."/>
            <person name="Mouchard L."/>
            <person name="Reinert K."/>
            <person name="Remington K.A."/>
            <person name="Clark A.G."/>
            <person name="Waterman M.S."/>
            <person name="Eichler E.E."/>
            <person name="Adams M.D."/>
            <person name="Hunkapiller M.W."/>
            <person name="Myers E.W."/>
            <person name="Venter J.C."/>
        </authorList>
    </citation>
    <scope>NUCLEOTIDE SEQUENCE [LARGE SCALE GENOMIC DNA]</scope>
</reference>
<reference key="4">
    <citation type="journal article" date="2004" name="Genome Res.">
        <title>The status, quality, and expansion of the NIH full-length cDNA project: the Mammalian Gene Collection (MGC).</title>
        <authorList>
            <consortium name="The MGC Project Team"/>
        </authorList>
    </citation>
    <scope>NUCLEOTIDE SEQUENCE [LARGE SCALE MRNA] (ISOFORMS 1 AND 3)</scope>
    <source>
        <tissue>Eye</tissue>
        <tissue>Liver</tissue>
        <tissue>Skin</tissue>
    </source>
</reference>
<reference key="5">
    <citation type="journal article" date="2024" name="Biochem. J.">
        <title>The uncharacterized protein ZNF200 interacts with PRMT3 and aids its stability and nuclear translocation.</title>
        <authorList>
            <person name="Gupta S."/>
            <person name="Verma M."/>
            <person name="Kadumuri R.V."/>
            <person name="Chutani N."/>
            <person name="Khan M.I.K."/>
            <person name="Chavali S."/>
            <person name="Dhayalan A."/>
        </authorList>
    </citation>
    <scope>FUNCTION</scope>
    <scope>INTERACTION WITH PRMT3</scope>
    <scope>SUBCELLULAR LOCATION</scope>
</reference>
<evidence type="ECO:0000255" key="1">
    <source>
        <dbReference type="PROSITE-ProRule" id="PRU00042"/>
    </source>
</evidence>
<evidence type="ECO:0000256" key="2">
    <source>
        <dbReference type="SAM" id="MobiDB-lite"/>
    </source>
</evidence>
<evidence type="ECO:0000269" key="3">
    <source>
    </source>
</evidence>
<evidence type="ECO:0000303" key="4">
    <source>
    </source>
</evidence>
<evidence type="ECO:0000303" key="5">
    <source>
    </source>
</evidence>
<evidence type="ECO:0000305" key="6"/>